<protein>
    <recommendedName>
        <fullName evidence="1">NADH-quinone oxidoreductase subunit H</fullName>
        <ecNumber evidence="1">7.1.1.-</ecNumber>
    </recommendedName>
    <alternativeName>
        <fullName evidence="1">NADH dehydrogenase I subunit H</fullName>
    </alternativeName>
    <alternativeName>
        <fullName evidence="1">NDH-1 subunit H</fullName>
    </alternativeName>
</protein>
<feature type="chain" id="PRO_1000067756" description="NADH-quinone oxidoreductase subunit H">
    <location>
        <begin position="1"/>
        <end position="339"/>
    </location>
</feature>
<feature type="transmembrane region" description="Helical" evidence="1">
    <location>
        <begin position="10"/>
        <end position="30"/>
    </location>
</feature>
<feature type="transmembrane region" description="Helical" evidence="1">
    <location>
        <begin position="50"/>
        <end position="70"/>
    </location>
</feature>
<feature type="transmembrane region" description="Helical" evidence="1">
    <location>
        <begin position="82"/>
        <end position="102"/>
    </location>
</feature>
<feature type="transmembrane region" description="Helical" evidence="1">
    <location>
        <begin position="115"/>
        <end position="135"/>
    </location>
</feature>
<feature type="transmembrane region" description="Helical" evidence="1">
    <location>
        <begin position="161"/>
        <end position="181"/>
    </location>
</feature>
<feature type="transmembrane region" description="Helical" evidence="1">
    <location>
        <begin position="187"/>
        <end position="207"/>
    </location>
</feature>
<feature type="transmembrane region" description="Helical" evidence="1">
    <location>
        <begin position="235"/>
        <end position="255"/>
    </location>
</feature>
<feature type="transmembrane region" description="Helical" evidence="1">
    <location>
        <begin position="275"/>
        <end position="295"/>
    </location>
</feature>
<feature type="transmembrane region" description="Helical" evidence="1">
    <location>
        <begin position="310"/>
        <end position="330"/>
    </location>
</feature>
<accession>A8EZZ9</accession>
<sequence length="339" mass="37953">MTSLFFEYTFPLIIIALKVVAITVPLILCVAYLTYVERRVIGLMQLRRGPNVVGPFGLLQPIADAVKLLFKEPIIPTNSDRILFILAPMITFILSLIGWAVVPFAKGLVLADINVGVLYILAISSLSVYGIIIAGWASNSKYAFLGAIRSSAQMISYEVSMGLVIITVLLTTGTLNLSGIIEAQRTIPWWIDLMLLPMGVVFFISVLAETNRLPFDLPEAESELVAGYNVEYSSMGFALFFLGEYANMILVSAMTTTFFLGGYLPPFNISWLDCIPGFFWFAFKVGFLLFCFLWIRATLPRYRYDQLMRLGWKVLLPLTLFWVVLVSSVLMYTDHLPSV</sequence>
<organism>
    <name type="scientific">Rickettsia canadensis (strain McKiel)</name>
    <dbReference type="NCBI Taxonomy" id="293613"/>
    <lineage>
        <taxon>Bacteria</taxon>
        <taxon>Pseudomonadati</taxon>
        <taxon>Pseudomonadota</taxon>
        <taxon>Alphaproteobacteria</taxon>
        <taxon>Rickettsiales</taxon>
        <taxon>Rickettsiaceae</taxon>
        <taxon>Rickettsieae</taxon>
        <taxon>Rickettsia</taxon>
        <taxon>belli group</taxon>
    </lineage>
</organism>
<keyword id="KW-0997">Cell inner membrane</keyword>
<keyword id="KW-1003">Cell membrane</keyword>
<keyword id="KW-0472">Membrane</keyword>
<keyword id="KW-0520">NAD</keyword>
<keyword id="KW-0874">Quinone</keyword>
<keyword id="KW-1278">Translocase</keyword>
<keyword id="KW-0812">Transmembrane</keyword>
<keyword id="KW-1133">Transmembrane helix</keyword>
<keyword id="KW-0830">Ubiquinone</keyword>
<name>NUOH_RICCK</name>
<dbReference type="EC" id="7.1.1.-" evidence="1"/>
<dbReference type="EMBL" id="CP000409">
    <property type="protein sequence ID" value="ABV73932.1"/>
    <property type="molecule type" value="Genomic_DNA"/>
</dbReference>
<dbReference type="RefSeq" id="WP_012149127.1">
    <property type="nucleotide sequence ID" value="NC_009879.1"/>
</dbReference>
<dbReference type="SMR" id="A8EZZ9"/>
<dbReference type="STRING" id="293613.A1E_05080"/>
<dbReference type="KEGG" id="rcm:A1E_05080"/>
<dbReference type="eggNOG" id="COG1005">
    <property type="taxonomic scope" value="Bacteria"/>
</dbReference>
<dbReference type="HOGENOM" id="CLU_015134_0_1_5"/>
<dbReference type="Proteomes" id="UP000007056">
    <property type="component" value="Chromosome"/>
</dbReference>
<dbReference type="GO" id="GO:0005886">
    <property type="term" value="C:plasma membrane"/>
    <property type="evidence" value="ECO:0007669"/>
    <property type="project" value="UniProtKB-SubCell"/>
</dbReference>
<dbReference type="GO" id="GO:0003954">
    <property type="term" value="F:NADH dehydrogenase activity"/>
    <property type="evidence" value="ECO:0007669"/>
    <property type="project" value="TreeGrafter"/>
</dbReference>
<dbReference type="GO" id="GO:0016655">
    <property type="term" value="F:oxidoreductase activity, acting on NAD(P)H, quinone or similar compound as acceptor"/>
    <property type="evidence" value="ECO:0007669"/>
    <property type="project" value="UniProtKB-UniRule"/>
</dbReference>
<dbReference type="GO" id="GO:0048038">
    <property type="term" value="F:quinone binding"/>
    <property type="evidence" value="ECO:0007669"/>
    <property type="project" value="UniProtKB-KW"/>
</dbReference>
<dbReference type="GO" id="GO:0009060">
    <property type="term" value="P:aerobic respiration"/>
    <property type="evidence" value="ECO:0007669"/>
    <property type="project" value="TreeGrafter"/>
</dbReference>
<dbReference type="HAMAP" id="MF_01350">
    <property type="entry name" value="NDH1_NuoH"/>
    <property type="match status" value="1"/>
</dbReference>
<dbReference type="InterPro" id="IPR001694">
    <property type="entry name" value="NADH_UbQ_OxRdtase_su1/FPO"/>
</dbReference>
<dbReference type="InterPro" id="IPR018086">
    <property type="entry name" value="NADH_UbQ_OxRdtase_su1_CS"/>
</dbReference>
<dbReference type="NCBIfam" id="NF004741">
    <property type="entry name" value="PRK06076.1-2"/>
    <property type="match status" value="1"/>
</dbReference>
<dbReference type="NCBIfam" id="NF004745">
    <property type="entry name" value="PRK06076.1-6"/>
    <property type="match status" value="1"/>
</dbReference>
<dbReference type="PANTHER" id="PTHR11432">
    <property type="entry name" value="NADH DEHYDROGENASE SUBUNIT 1"/>
    <property type="match status" value="1"/>
</dbReference>
<dbReference type="PANTHER" id="PTHR11432:SF3">
    <property type="entry name" value="NADH-UBIQUINONE OXIDOREDUCTASE CHAIN 1"/>
    <property type="match status" value="1"/>
</dbReference>
<dbReference type="Pfam" id="PF00146">
    <property type="entry name" value="NADHdh"/>
    <property type="match status" value="1"/>
</dbReference>
<dbReference type="PROSITE" id="PS00667">
    <property type="entry name" value="COMPLEX1_ND1_1"/>
    <property type="match status" value="1"/>
</dbReference>
<dbReference type="PROSITE" id="PS00668">
    <property type="entry name" value="COMPLEX1_ND1_2"/>
    <property type="match status" value="1"/>
</dbReference>
<evidence type="ECO:0000255" key="1">
    <source>
        <dbReference type="HAMAP-Rule" id="MF_01350"/>
    </source>
</evidence>
<gene>
    <name evidence="1" type="primary">nuoH</name>
    <name type="ordered locus">A1E_05080</name>
</gene>
<reference key="1">
    <citation type="submission" date="2007-09" db="EMBL/GenBank/DDBJ databases">
        <title>Complete genome sequence of Rickettsia canadensis.</title>
        <authorList>
            <person name="Madan A."/>
            <person name="Fahey J."/>
            <person name="Helton E."/>
            <person name="Ketteman M."/>
            <person name="Madan A."/>
            <person name="Rodrigues S."/>
            <person name="Sanchez A."/>
            <person name="Whiting M."/>
            <person name="Dasch G."/>
            <person name="Eremeeva M."/>
        </authorList>
    </citation>
    <scope>NUCLEOTIDE SEQUENCE [LARGE SCALE GENOMIC DNA]</scope>
    <source>
        <strain>McKiel</strain>
    </source>
</reference>
<proteinExistence type="inferred from homology"/>
<comment type="function">
    <text evidence="1">NDH-1 shuttles electrons from NADH, via FMN and iron-sulfur (Fe-S) centers, to quinones in the respiratory chain. The immediate electron acceptor for the enzyme in this species is believed to be ubiquinone. Couples the redox reaction to proton translocation (for every two electrons transferred, four hydrogen ions are translocated across the cytoplasmic membrane), and thus conserves the redox energy in a proton gradient. This subunit may bind ubiquinone.</text>
</comment>
<comment type="catalytic activity">
    <reaction evidence="1">
        <text>a quinone + NADH + 5 H(+)(in) = a quinol + NAD(+) + 4 H(+)(out)</text>
        <dbReference type="Rhea" id="RHEA:57888"/>
        <dbReference type="ChEBI" id="CHEBI:15378"/>
        <dbReference type="ChEBI" id="CHEBI:24646"/>
        <dbReference type="ChEBI" id="CHEBI:57540"/>
        <dbReference type="ChEBI" id="CHEBI:57945"/>
        <dbReference type="ChEBI" id="CHEBI:132124"/>
    </reaction>
</comment>
<comment type="subunit">
    <text evidence="1">NDH-1 is composed of 14 different subunits. Subunits NuoA, H, J, K, L, M, N constitute the membrane sector of the complex.</text>
</comment>
<comment type="subcellular location">
    <subcellularLocation>
        <location evidence="1">Cell inner membrane</location>
        <topology evidence="1">Multi-pass membrane protein</topology>
    </subcellularLocation>
</comment>
<comment type="similarity">
    <text evidence="1">Belongs to the complex I subunit 1 family.</text>
</comment>